<gene>
    <name evidence="1 3" type="primary">trmR</name>
    <name type="synonym">yrrM</name>
    <name type="ordered locus">BSU27360</name>
</gene>
<reference key="1">
    <citation type="journal article" date="1997" name="Nature">
        <title>The complete genome sequence of the Gram-positive bacterium Bacillus subtilis.</title>
        <authorList>
            <person name="Kunst F."/>
            <person name="Ogasawara N."/>
            <person name="Moszer I."/>
            <person name="Albertini A.M."/>
            <person name="Alloni G."/>
            <person name="Azevedo V."/>
            <person name="Bertero M.G."/>
            <person name="Bessieres P."/>
            <person name="Bolotin A."/>
            <person name="Borchert S."/>
            <person name="Borriss R."/>
            <person name="Boursier L."/>
            <person name="Brans A."/>
            <person name="Braun M."/>
            <person name="Brignell S.C."/>
            <person name="Bron S."/>
            <person name="Brouillet S."/>
            <person name="Bruschi C.V."/>
            <person name="Caldwell B."/>
            <person name="Capuano V."/>
            <person name="Carter N.M."/>
            <person name="Choi S.-K."/>
            <person name="Codani J.-J."/>
            <person name="Connerton I.F."/>
            <person name="Cummings N.J."/>
            <person name="Daniel R.A."/>
            <person name="Denizot F."/>
            <person name="Devine K.M."/>
            <person name="Duesterhoeft A."/>
            <person name="Ehrlich S.D."/>
            <person name="Emmerson P.T."/>
            <person name="Entian K.-D."/>
            <person name="Errington J."/>
            <person name="Fabret C."/>
            <person name="Ferrari E."/>
            <person name="Foulger D."/>
            <person name="Fritz C."/>
            <person name="Fujita M."/>
            <person name="Fujita Y."/>
            <person name="Fuma S."/>
            <person name="Galizzi A."/>
            <person name="Galleron N."/>
            <person name="Ghim S.-Y."/>
            <person name="Glaser P."/>
            <person name="Goffeau A."/>
            <person name="Golightly E.J."/>
            <person name="Grandi G."/>
            <person name="Guiseppi G."/>
            <person name="Guy B.J."/>
            <person name="Haga K."/>
            <person name="Haiech J."/>
            <person name="Harwood C.R."/>
            <person name="Henaut A."/>
            <person name="Hilbert H."/>
            <person name="Holsappel S."/>
            <person name="Hosono S."/>
            <person name="Hullo M.-F."/>
            <person name="Itaya M."/>
            <person name="Jones L.-M."/>
            <person name="Joris B."/>
            <person name="Karamata D."/>
            <person name="Kasahara Y."/>
            <person name="Klaerr-Blanchard M."/>
            <person name="Klein C."/>
            <person name="Kobayashi Y."/>
            <person name="Koetter P."/>
            <person name="Koningstein G."/>
            <person name="Krogh S."/>
            <person name="Kumano M."/>
            <person name="Kurita K."/>
            <person name="Lapidus A."/>
            <person name="Lardinois S."/>
            <person name="Lauber J."/>
            <person name="Lazarevic V."/>
            <person name="Lee S.-M."/>
            <person name="Levine A."/>
            <person name="Liu H."/>
            <person name="Masuda S."/>
            <person name="Mauel C."/>
            <person name="Medigue C."/>
            <person name="Medina N."/>
            <person name="Mellado R.P."/>
            <person name="Mizuno M."/>
            <person name="Moestl D."/>
            <person name="Nakai S."/>
            <person name="Noback M."/>
            <person name="Noone D."/>
            <person name="O'Reilly M."/>
            <person name="Ogawa K."/>
            <person name="Ogiwara A."/>
            <person name="Oudega B."/>
            <person name="Park S.-H."/>
            <person name="Parro V."/>
            <person name="Pohl T.M."/>
            <person name="Portetelle D."/>
            <person name="Porwollik S."/>
            <person name="Prescott A.M."/>
            <person name="Presecan E."/>
            <person name="Pujic P."/>
            <person name="Purnelle B."/>
            <person name="Rapoport G."/>
            <person name="Rey M."/>
            <person name="Reynolds S."/>
            <person name="Rieger M."/>
            <person name="Rivolta C."/>
            <person name="Rocha E."/>
            <person name="Roche B."/>
            <person name="Rose M."/>
            <person name="Sadaie Y."/>
            <person name="Sato T."/>
            <person name="Scanlan E."/>
            <person name="Schleich S."/>
            <person name="Schroeter R."/>
            <person name="Scoffone F."/>
            <person name="Sekiguchi J."/>
            <person name="Sekowska A."/>
            <person name="Seror S.J."/>
            <person name="Serror P."/>
            <person name="Shin B.-S."/>
            <person name="Soldo B."/>
            <person name="Sorokin A."/>
            <person name="Tacconi E."/>
            <person name="Takagi T."/>
            <person name="Takahashi H."/>
            <person name="Takemaru K."/>
            <person name="Takeuchi M."/>
            <person name="Tamakoshi A."/>
            <person name="Tanaka T."/>
            <person name="Terpstra P."/>
            <person name="Tognoni A."/>
            <person name="Tosato V."/>
            <person name="Uchiyama S."/>
            <person name="Vandenbol M."/>
            <person name="Vannier F."/>
            <person name="Vassarotti A."/>
            <person name="Viari A."/>
            <person name="Wambutt R."/>
            <person name="Wedler E."/>
            <person name="Wedler H."/>
            <person name="Weitzenegger T."/>
            <person name="Winters P."/>
            <person name="Wipat A."/>
            <person name="Yamamoto H."/>
            <person name="Yamane K."/>
            <person name="Yasumoto K."/>
            <person name="Yata K."/>
            <person name="Yoshida K."/>
            <person name="Yoshikawa H.-F."/>
            <person name="Zumstein E."/>
            <person name="Yoshikawa H."/>
            <person name="Danchin A."/>
        </authorList>
    </citation>
    <scope>NUCLEOTIDE SEQUENCE [LARGE SCALE GENOMIC DNA]</scope>
    <source>
        <strain>168</strain>
    </source>
</reference>
<reference evidence="5 6" key="2">
    <citation type="journal article" date="2018" name="Nucleic Acids Res.">
        <title>Identification of a novel tRNA wobble uridine modifying activity in the biosynthesis of 5-methoxyuridine.</title>
        <authorList>
            <person name="Ryu H."/>
            <person name="Grove T.L."/>
            <person name="Almo S.C."/>
            <person name="Kim J."/>
        </authorList>
    </citation>
    <scope>X-RAY CRYSTALLOGRAPHY (1.70 ANGSTROMS) IN COMPLEXES WITH S-ADENOSYL-L-METHIONINE; S-ADENOSYL-L-HOMOCYSTEINE; MAGNESIUM AND ANTICODON STEMLOOP OF TRNA(ALA)</scope>
    <scope>FUNCTION</scope>
    <scope>CATALYTIC ACTIVITY</scope>
    <scope>SUBUNIT</scope>
    <scope>DISRUPTION PHENOTYPE</scope>
    <source>
        <strain>168</strain>
    </source>
</reference>
<dbReference type="EC" id="2.1.1.-" evidence="1 2"/>
<dbReference type="EMBL" id="AL009126">
    <property type="protein sequence ID" value="CAB14678.1"/>
    <property type="molecule type" value="Genomic_DNA"/>
</dbReference>
<dbReference type="PIR" id="F69979">
    <property type="entry name" value="F69979"/>
</dbReference>
<dbReference type="RefSeq" id="NP_390614.1">
    <property type="nucleotide sequence ID" value="NC_000964.3"/>
</dbReference>
<dbReference type="RefSeq" id="WP_003229800.1">
    <property type="nucleotide sequence ID" value="NZ_OZ025638.1"/>
</dbReference>
<dbReference type="PDB" id="5ZW3">
    <property type="method" value="X-ray"/>
    <property type="resolution" value="2.27 A"/>
    <property type="chains" value="A/B=1-217"/>
</dbReference>
<dbReference type="PDB" id="5ZW4">
    <property type="method" value="X-ray"/>
    <property type="resolution" value="1.70 A"/>
    <property type="chains" value="A=1-217"/>
</dbReference>
<dbReference type="PDBsum" id="5ZW3"/>
<dbReference type="PDBsum" id="5ZW4"/>
<dbReference type="SMR" id="O32036"/>
<dbReference type="FunCoup" id="O32036">
    <property type="interactions" value="449"/>
</dbReference>
<dbReference type="STRING" id="224308.BSU27360"/>
<dbReference type="PaxDb" id="224308-BSU27360"/>
<dbReference type="EnsemblBacteria" id="CAB14678">
    <property type="protein sequence ID" value="CAB14678"/>
    <property type="gene ID" value="BSU_27360"/>
</dbReference>
<dbReference type="GeneID" id="937719"/>
<dbReference type="KEGG" id="bsu:BSU27360"/>
<dbReference type="PATRIC" id="fig|224308.179.peg.2972"/>
<dbReference type="eggNOG" id="COG4122">
    <property type="taxonomic scope" value="Bacteria"/>
</dbReference>
<dbReference type="InParanoid" id="O32036"/>
<dbReference type="OrthoDB" id="9799672at2"/>
<dbReference type="PhylomeDB" id="O32036"/>
<dbReference type="BioCyc" id="BSUB:BSU27360-MONOMER"/>
<dbReference type="BioCyc" id="MetaCyc:BSU27360-MONOMER"/>
<dbReference type="Proteomes" id="UP000001570">
    <property type="component" value="Chromosome"/>
</dbReference>
<dbReference type="GO" id="GO:0000287">
    <property type="term" value="F:magnesium ion binding"/>
    <property type="evidence" value="ECO:0007669"/>
    <property type="project" value="UniProtKB-UniRule"/>
</dbReference>
<dbReference type="GO" id="GO:0008171">
    <property type="term" value="F:O-methyltransferase activity"/>
    <property type="evidence" value="ECO:0000318"/>
    <property type="project" value="GO_Central"/>
</dbReference>
<dbReference type="GO" id="GO:0016300">
    <property type="term" value="F:tRNA (uridine) methyltransferase activity"/>
    <property type="evidence" value="ECO:0007669"/>
    <property type="project" value="UniProtKB-UniRule"/>
</dbReference>
<dbReference type="GO" id="GO:0030488">
    <property type="term" value="P:tRNA methylation"/>
    <property type="evidence" value="ECO:0007669"/>
    <property type="project" value="UniProtKB-UniRule"/>
</dbReference>
<dbReference type="CDD" id="cd02440">
    <property type="entry name" value="AdoMet_MTases"/>
    <property type="match status" value="1"/>
</dbReference>
<dbReference type="Gene3D" id="3.40.50.150">
    <property type="entry name" value="Vaccinia Virus protein VP39"/>
    <property type="match status" value="1"/>
</dbReference>
<dbReference type="HAMAP" id="MF_02217">
    <property type="entry name" value="TrmR_methyltr"/>
    <property type="match status" value="1"/>
</dbReference>
<dbReference type="InterPro" id="IPR050362">
    <property type="entry name" value="Cation-dep_OMT"/>
</dbReference>
<dbReference type="InterPro" id="IPR029063">
    <property type="entry name" value="SAM-dependent_MTases_sf"/>
</dbReference>
<dbReference type="InterPro" id="IPR002935">
    <property type="entry name" value="SAM_O-MeTrfase"/>
</dbReference>
<dbReference type="InterPro" id="IPR043675">
    <property type="entry name" value="TrmR_methyltr"/>
</dbReference>
<dbReference type="PANTHER" id="PTHR10509:SF14">
    <property type="entry name" value="CAFFEOYL-COA O-METHYLTRANSFERASE 3-RELATED"/>
    <property type="match status" value="1"/>
</dbReference>
<dbReference type="PANTHER" id="PTHR10509">
    <property type="entry name" value="O-METHYLTRANSFERASE-RELATED"/>
    <property type="match status" value="1"/>
</dbReference>
<dbReference type="Pfam" id="PF01596">
    <property type="entry name" value="Methyltransf_3"/>
    <property type="match status" value="1"/>
</dbReference>
<dbReference type="SUPFAM" id="SSF53335">
    <property type="entry name" value="S-adenosyl-L-methionine-dependent methyltransferases"/>
    <property type="match status" value="1"/>
</dbReference>
<dbReference type="PROSITE" id="PS51682">
    <property type="entry name" value="SAM_OMT_I"/>
    <property type="match status" value="1"/>
</dbReference>
<comment type="function">
    <text evidence="1 2">Catalyzes the methylation of 5-hydroxyuridine (ho5U) to form 5-methoxyuridine (mo5U) at position 34 in tRNAs.</text>
</comment>
<comment type="catalytic activity">
    <reaction evidence="1 2">
        <text>5-hydroxyuridine(34) in tRNA + S-adenosyl-L-methionine = 5-methoxyuridine(34) in tRNA + S-adenosyl-L-homocysteine + H(+)</text>
        <dbReference type="Rhea" id="RHEA:60524"/>
        <dbReference type="Rhea" id="RHEA-COMP:13381"/>
        <dbReference type="Rhea" id="RHEA-COMP:15591"/>
        <dbReference type="ChEBI" id="CHEBI:15378"/>
        <dbReference type="ChEBI" id="CHEBI:57856"/>
        <dbReference type="ChEBI" id="CHEBI:59789"/>
        <dbReference type="ChEBI" id="CHEBI:136877"/>
        <dbReference type="ChEBI" id="CHEBI:143860"/>
    </reaction>
</comment>
<comment type="subunit">
    <text evidence="1 2">Homodimer.</text>
</comment>
<comment type="disruption phenotype">
    <text evidence="2">Deletion mutant does not contain mo5U.</text>
</comment>
<comment type="miscellaneous">
    <text evidence="2">Binds magnesium, but the ion is dispensable for mo5U forming activity.</text>
</comment>
<comment type="similarity">
    <text evidence="1">Belongs to the class I-like SAM-binding methyltransferase superfamily. Cation-dependent O-methyltransferase family.</text>
</comment>
<evidence type="ECO:0000255" key="1">
    <source>
        <dbReference type="HAMAP-Rule" id="MF_02217"/>
    </source>
</evidence>
<evidence type="ECO:0000269" key="2">
    <source>
    </source>
</evidence>
<evidence type="ECO:0000303" key="3">
    <source>
    </source>
</evidence>
<evidence type="ECO:0000305" key="4"/>
<evidence type="ECO:0007744" key="5">
    <source>
        <dbReference type="PDB" id="5ZW3"/>
    </source>
</evidence>
<evidence type="ECO:0007744" key="6">
    <source>
        <dbReference type="PDB" id="5ZW4"/>
    </source>
</evidence>
<evidence type="ECO:0007829" key="7">
    <source>
        <dbReference type="PDB" id="5ZW4"/>
    </source>
</evidence>
<accession>O32036</accession>
<protein>
    <recommendedName>
        <fullName evidence="1 4">tRNA 5-hydroxyuridine methyltransferase</fullName>
        <ecNumber evidence="1 2">2.1.1.-</ecNumber>
    </recommendedName>
    <alternativeName>
        <fullName evidence="1 3">ho5U methyltransferase</fullName>
    </alternativeName>
</protein>
<name>TRMR_BACSU</name>
<keyword id="KW-0002">3D-structure</keyword>
<keyword id="KW-0460">Magnesium</keyword>
<keyword id="KW-0479">Metal-binding</keyword>
<keyword id="KW-0489">Methyltransferase</keyword>
<keyword id="KW-1185">Reference proteome</keyword>
<keyword id="KW-0949">S-adenosyl-L-methionine</keyword>
<keyword id="KW-0808">Transferase</keyword>
<keyword id="KW-0819">tRNA processing</keyword>
<feature type="chain" id="PRO_0000360804" description="tRNA 5-hydroxyuridine methyltransferase">
    <location>
        <begin position="1"/>
        <end position="217"/>
    </location>
</feature>
<feature type="binding site" evidence="1 2">
    <location>
        <position position="38"/>
    </location>
    <ligand>
        <name>S-adenosyl-L-methionine</name>
        <dbReference type="ChEBI" id="CHEBI:59789"/>
    </ligand>
</feature>
<feature type="binding site" evidence="1 2">
    <location>
        <position position="68"/>
    </location>
    <ligand>
        <name>S-adenosyl-L-methionine</name>
        <dbReference type="ChEBI" id="CHEBI:59789"/>
    </ligand>
</feature>
<feature type="binding site" evidence="1 2">
    <location>
        <position position="85"/>
    </location>
    <ligand>
        <name>S-adenosyl-L-methionine</name>
        <dbReference type="ChEBI" id="CHEBI:59789"/>
    </ligand>
</feature>
<feature type="binding site" evidence="1 2">
    <location>
        <begin position="113"/>
        <end position="114"/>
    </location>
    <ligand>
        <name>S-adenosyl-L-methionine</name>
        <dbReference type="ChEBI" id="CHEBI:59789"/>
    </ligand>
</feature>
<feature type="binding site" evidence="1 2">
    <location>
        <position position="133"/>
    </location>
    <ligand>
        <name>Mg(2+)</name>
        <dbReference type="ChEBI" id="CHEBI:18420"/>
    </ligand>
</feature>
<feature type="binding site" evidence="1 2">
    <location>
        <position position="133"/>
    </location>
    <ligand>
        <name>S-adenosyl-L-methionine</name>
        <dbReference type="ChEBI" id="CHEBI:59789"/>
    </ligand>
</feature>
<feature type="binding site" evidence="1 2">
    <location>
        <position position="159"/>
    </location>
    <ligand>
        <name>Mg(2+)</name>
        <dbReference type="ChEBI" id="CHEBI:18420"/>
    </ligand>
</feature>
<feature type="binding site" evidence="1 2">
    <location>
        <position position="160"/>
    </location>
    <ligand>
        <name>Mg(2+)</name>
        <dbReference type="ChEBI" id="CHEBI:18420"/>
    </ligand>
</feature>
<feature type="helix" evidence="7">
    <location>
        <begin position="4"/>
        <end position="15"/>
    </location>
</feature>
<feature type="helix" evidence="7">
    <location>
        <begin position="21"/>
        <end position="32"/>
    </location>
</feature>
<feature type="helix" evidence="7">
    <location>
        <begin position="40"/>
        <end position="53"/>
    </location>
</feature>
<feature type="strand" evidence="7">
    <location>
        <begin position="56"/>
        <end position="61"/>
    </location>
</feature>
<feature type="helix" evidence="7">
    <location>
        <begin position="67"/>
        <end position="75"/>
    </location>
</feature>
<feature type="strand" evidence="7">
    <location>
        <begin position="80"/>
        <end position="85"/>
    </location>
</feature>
<feature type="helix" evidence="7">
    <location>
        <begin position="88"/>
        <end position="100"/>
    </location>
</feature>
<feature type="turn" evidence="7">
    <location>
        <begin position="104"/>
        <end position="106"/>
    </location>
</feature>
<feature type="strand" evidence="7">
    <location>
        <begin position="107"/>
        <end position="112"/>
    </location>
</feature>
<feature type="helix" evidence="7">
    <location>
        <begin position="114"/>
        <end position="116"/>
    </location>
</feature>
<feature type="helix" evidence="7">
    <location>
        <begin position="118"/>
        <end position="122"/>
    </location>
</feature>
<feature type="strand" evidence="7">
    <location>
        <begin position="127"/>
        <end position="132"/>
    </location>
</feature>
<feature type="helix" evidence="7">
    <location>
        <begin position="136"/>
        <end position="138"/>
    </location>
</feature>
<feature type="helix" evidence="7">
    <location>
        <begin position="139"/>
        <end position="146"/>
    </location>
</feature>
<feature type="helix" evidence="7">
    <location>
        <begin position="147"/>
        <end position="149"/>
    </location>
</feature>
<feature type="strand" evidence="7">
    <location>
        <begin position="150"/>
        <end position="159"/>
    </location>
</feature>
<feature type="helix" evidence="7">
    <location>
        <begin position="163"/>
        <end position="168"/>
    </location>
</feature>
<feature type="helix" evidence="7">
    <location>
        <begin position="177"/>
        <end position="195"/>
    </location>
</feature>
<feature type="strand" evidence="7">
    <location>
        <begin position="199"/>
        <end position="204"/>
    </location>
</feature>
<feature type="strand" evidence="7">
    <location>
        <begin position="210"/>
        <end position="215"/>
    </location>
</feature>
<organism>
    <name type="scientific">Bacillus subtilis (strain 168)</name>
    <dbReference type="NCBI Taxonomy" id="224308"/>
    <lineage>
        <taxon>Bacteria</taxon>
        <taxon>Bacillati</taxon>
        <taxon>Bacillota</taxon>
        <taxon>Bacilli</taxon>
        <taxon>Bacillales</taxon>
        <taxon>Bacillaceae</taxon>
        <taxon>Bacillus</taxon>
    </lineage>
</organism>
<proteinExistence type="evidence at protein level"/>
<sequence>MTDRYEQINDYIEALLKPRPDNVKRLEAYAEEHHVPIMEKAGMEVLLQILSVKQPKKILEIGTAIGYSAIRMALELPSAEIYTIERNEKRHEEAVNNIKEFQLDDRIHVFYGDALELADAVHVTAPYDVIFIDAAKGQYQNFFHLYEPMLSPDGVIITDNVLFKGLVAEDYSKIEPKRRRRLVAKIDEYNHWLMNHPDYQTAIIPVGDGLAISKKKR</sequence>